<gene>
    <name type="primary">TGFB1I1</name>
    <name type="synonym">ARA55</name>
</gene>
<sequence>MEDLDALLSDLETTTSHMPRSGAPKERPAEPLTPPPSYGHQPQTGSGESSGASGDKDHLYSTVCKPRSPKPAAPAAPPFSSSSGVLGTGLCELDRLLQELNATQFNITDEIMSQFPSSKVASGEQKEDQSEDKKRPSLPSSPSPGLPKASATSATLELDRLMASLSDFRVQNHLPASGPTQPPVVSSTNEGSPSPPEPTGKGSLDTMLGLLQSDLSRRGVPTQAKGLCGSCNKPIAGQVVTALGRAWHPEHFVCGGCSTALGGSSFFEKDGAPFCPECYFERFSPRCGFCNQPIRHKMVTALGTHWHPEHFCCVSCGEPFGDEGFHEREGRPYCRRDFLQLFAPRCQGCQGPILDNYISALSALWHPDCFVCRECFAPFSGGSFFEHEGRPLCENHFHARRGSLCATCGLPVTGRCVSALGRRFHPDHFTCTFCLRPLTKGSFQERAGKPYCQPCFLKLFG</sequence>
<dbReference type="EMBL" id="AF116343">
    <property type="protein sequence ID" value="AAD22552.1"/>
    <property type="molecule type" value="mRNA"/>
</dbReference>
<dbReference type="EMBL" id="DQ309025">
    <property type="protein sequence ID" value="ABB96286.1"/>
    <property type="molecule type" value="Genomic_DNA"/>
</dbReference>
<dbReference type="EMBL" id="AK313327">
    <property type="protein sequence ID" value="BAG36132.1"/>
    <property type="molecule type" value="mRNA"/>
</dbReference>
<dbReference type="EMBL" id="CH471192">
    <property type="protein sequence ID" value="EAW52126.1"/>
    <property type="molecule type" value="Genomic_DNA"/>
</dbReference>
<dbReference type="EMBL" id="BC001507">
    <property type="protein sequence ID" value="AAH01507.2"/>
    <property type="molecule type" value="mRNA"/>
</dbReference>
<dbReference type="EMBL" id="BC001830">
    <property type="protein sequence ID" value="AAH01830.1"/>
    <property type="molecule type" value="mRNA"/>
</dbReference>
<dbReference type="EMBL" id="BC017288">
    <property type="protein sequence ID" value="AAH17288.1"/>
    <property type="molecule type" value="mRNA"/>
</dbReference>
<dbReference type="EMBL" id="BC032545">
    <property type="protein sequence ID" value="AAH32545.1"/>
    <property type="status" value="ALT_INIT"/>
    <property type="molecule type" value="mRNA"/>
</dbReference>
<dbReference type="EMBL" id="AB007836">
    <property type="protein sequence ID" value="BAA24799.1"/>
    <property type="molecule type" value="mRNA"/>
</dbReference>
<dbReference type="CCDS" id="CCDS10713.1">
    <molecule id="O43294-2"/>
</dbReference>
<dbReference type="CCDS" id="CCDS42156.1">
    <molecule id="O43294-1"/>
</dbReference>
<dbReference type="RefSeq" id="NP_001035919.1">
    <molecule id="O43294-1"/>
    <property type="nucleotide sequence ID" value="NM_001042454.3"/>
</dbReference>
<dbReference type="RefSeq" id="NP_001158191.1">
    <molecule id="O43294-2"/>
    <property type="nucleotide sequence ID" value="NM_001164719.1"/>
</dbReference>
<dbReference type="RefSeq" id="NP_057011.2">
    <molecule id="O43294-2"/>
    <property type="nucleotide sequence ID" value="NM_015927.4"/>
</dbReference>
<dbReference type="RefSeq" id="XP_024306180.1">
    <molecule id="O43294-2"/>
    <property type="nucleotide sequence ID" value="XM_024450412.2"/>
</dbReference>
<dbReference type="RefSeq" id="XP_054169786.1">
    <molecule id="O43294-2"/>
    <property type="nucleotide sequence ID" value="XM_054313811.1"/>
</dbReference>
<dbReference type="SMR" id="O43294"/>
<dbReference type="BioGRID" id="112899">
    <property type="interactions" value="44"/>
</dbReference>
<dbReference type="CORUM" id="O43294"/>
<dbReference type="DIP" id="DIP-5931N"/>
<dbReference type="ELM" id="O43294"/>
<dbReference type="FunCoup" id="O43294">
    <property type="interactions" value="349"/>
</dbReference>
<dbReference type="IntAct" id="O43294">
    <property type="interactions" value="37"/>
</dbReference>
<dbReference type="MINT" id="O43294"/>
<dbReference type="STRING" id="9606.ENSP00000378332"/>
<dbReference type="GlyGen" id="O43294">
    <property type="glycosylation" value="3 sites, 1 O-linked glycan (2 sites)"/>
</dbReference>
<dbReference type="iPTMnet" id="O43294"/>
<dbReference type="MetOSite" id="O43294"/>
<dbReference type="PhosphoSitePlus" id="O43294"/>
<dbReference type="BioMuta" id="TGFB1I1"/>
<dbReference type="jPOST" id="O43294"/>
<dbReference type="MassIVE" id="O43294"/>
<dbReference type="PaxDb" id="9606-ENSP00000378332"/>
<dbReference type="PeptideAtlas" id="O43294"/>
<dbReference type="ProteomicsDB" id="48865">
    <molecule id="O43294-1"/>
</dbReference>
<dbReference type="ProteomicsDB" id="48866">
    <molecule id="O43294-2"/>
</dbReference>
<dbReference type="Pumba" id="O43294"/>
<dbReference type="Antibodypedia" id="1738">
    <property type="antibodies" value="256 antibodies from 30 providers"/>
</dbReference>
<dbReference type="DNASU" id="7041"/>
<dbReference type="Ensembl" id="ENST00000361773.7">
    <molecule id="O43294-2"/>
    <property type="protein sequence ID" value="ENSP00000355117.3"/>
    <property type="gene ID" value="ENSG00000140682.19"/>
</dbReference>
<dbReference type="Ensembl" id="ENST00000394858.6">
    <molecule id="O43294-2"/>
    <property type="protein sequence ID" value="ENSP00000378327.2"/>
    <property type="gene ID" value="ENSG00000140682.19"/>
</dbReference>
<dbReference type="Ensembl" id="ENST00000394863.8">
    <molecule id="O43294-1"/>
    <property type="protein sequence ID" value="ENSP00000378332.3"/>
    <property type="gene ID" value="ENSG00000140682.19"/>
</dbReference>
<dbReference type="Ensembl" id="ENST00000567607.5">
    <molecule id="O43294-2"/>
    <property type="protein sequence ID" value="ENSP00000457586.1"/>
    <property type="gene ID" value="ENSG00000140682.19"/>
</dbReference>
<dbReference type="GeneID" id="7041"/>
<dbReference type="KEGG" id="hsa:7041"/>
<dbReference type="MANE-Select" id="ENST00000394863.8">
    <property type="protein sequence ID" value="ENSP00000378332.3"/>
    <property type="RefSeq nucleotide sequence ID" value="NM_001042454.3"/>
    <property type="RefSeq protein sequence ID" value="NP_001035919.1"/>
</dbReference>
<dbReference type="UCSC" id="uc002ecd.3">
    <molecule id="O43294-1"/>
    <property type="organism name" value="human"/>
</dbReference>
<dbReference type="AGR" id="HGNC:11767"/>
<dbReference type="CTD" id="7041"/>
<dbReference type="DisGeNET" id="7041"/>
<dbReference type="GeneCards" id="TGFB1I1"/>
<dbReference type="HGNC" id="HGNC:11767">
    <property type="gene designation" value="TGFB1I1"/>
</dbReference>
<dbReference type="HPA" id="ENSG00000140682">
    <property type="expression patterns" value="Tissue enhanced (endometrium, intestine)"/>
</dbReference>
<dbReference type="MIM" id="602353">
    <property type="type" value="gene"/>
</dbReference>
<dbReference type="neXtProt" id="NX_O43294"/>
<dbReference type="OpenTargets" id="ENSG00000140682"/>
<dbReference type="PharmGKB" id="PA36481"/>
<dbReference type="VEuPathDB" id="HostDB:ENSG00000140682"/>
<dbReference type="eggNOG" id="KOG1703">
    <property type="taxonomic scope" value="Eukaryota"/>
</dbReference>
<dbReference type="GeneTree" id="ENSGT00940000160447"/>
<dbReference type="HOGENOM" id="CLU_001357_1_2_1"/>
<dbReference type="InParanoid" id="O43294"/>
<dbReference type="OMA" id="YCPECYF"/>
<dbReference type="OrthoDB" id="15567at2759"/>
<dbReference type="PAN-GO" id="O43294">
    <property type="GO annotations" value="4 GO annotations based on evolutionary models"/>
</dbReference>
<dbReference type="PhylomeDB" id="O43294"/>
<dbReference type="TreeFam" id="TF314113"/>
<dbReference type="PathwayCommons" id="O43294"/>
<dbReference type="SignaLink" id="O43294"/>
<dbReference type="SIGNOR" id="O43294"/>
<dbReference type="BioGRID-ORCS" id="7041">
    <property type="hits" value="93 hits in 1154 CRISPR screens"/>
</dbReference>
<dbReference type="ChiTaRS" id="TGFB1I1">
    <property type="organism name" value="human"/>
</dbReference>
<dbReference type="GeneWiki" id="TGFB1I1"/>
<dbReference type="GenomeRNAi" id="7041"/>
<dbReference type="Pharos" id="O43294">
    <property type="development level" value="Tbio"/>
</dbReference>
<dbReference type="PRO" id="PR:O43294"/>
<dbReference type="Proteomes" id="UP000005640">
    <property type="component" value="Chromosome 16"/>
</dbReference>
<dbReference type="RNAct" id="O43294">
    <property type="molecule type" value="protein"/>
</dbReference>
<dbReference type="Bgee" id="ENSG00000140682">
    <property type="expression patterns" value="Expressed in saphenous vein and 164 other cell types or tissues"/>
</dbReference>
<dbReference type="ExpressionAtlas" id="O43294">
    <property type="expression patterns" value="baseline and differential"/>
</dbReference>
<dbReference type="GO" id="GO:0005856">
    <property type="term" value="C:cytoskeleton"/>
    <property type="evidence" value="ECO:0007669"/>
    <property type="project" value="UniProtKB-SubCell"/>
</dbReference>
<dbReference type="GO" id="GO:0005829">
    <property type="term" value="C:cytosol"/>
    <property type="evidence" value="ECO:0000314"/>
    <property type="project" value="HPA"/>
</dbReference>
<dbReference type="GO" id="GO:0005925">
    <property type="term" value="C:focal adhesion"/>
    <property type="evidence" value="ECO:0000314"/>
    <property type="project" value="HPA"/>
</dbReference>
<dbReference type="GO" id="GO:0043231">
    <property type="term" value="C:intracellular membrane-bounded organelle"/>
    <property type="evidence" value="ECO:0000314"/>
    <property type="project" value="HPA"/>
</dbReference>
<dbReference type="GO" id="GO:0016363">
    <property type="term" value="C:nuclear matrix"/>
    <property type="evidence" value="ECO:0007669"/>
    <property type="project" value="UniProtKB-SubCell"/>
</dbReference>
<dbReference type="GO" id="GO:0070411">
    <property type="term" value="F:I-SMAD binding"/>
    <property type="evidence" value="ECO:0000353"/>
    <property type="project" value="BHF-UCL"/>
</dbReference>
<dbReference type="GO" id="GO:0046872">
    <property type="term" value="F:metal ion binding"/>
    <property type="evidence" value="ECO:0007669"/>
    <property type="project" value="UniProtKB-KW"/>
</dbReference>
<dbReference type="GO" id="GO:0050681">
    <property type="term" value="F:nuclear androgen receptor binding"/>
    <property type="evidence" value="ECO:0000353"/>
    <property type="project" value="UniProtKB"/>
</dbReference>
<dbReference type="GO" id="GO:0048495">
    <property type="term" value="F:Roundabout binding"/>
    <property type="evidence" value="ECO:0000353"/>
    <property type="project" value="UniProtKB"/>
</dbReference>
<dbReference type="GO" id="GO:0003713">
    <property type="term" value="F:transcription coactivator activity"/>
    <property type="evidence" value="ECO:0000314"/>
    <property type="project" value="UniProtKB"/>
</dbReference>
<dbReference type="GO" id="GO:0007155">
    <property type="term" value="P:cell adhesion"/>
    <property type="evidence" value="ECO:0000304"/>
    <property type="project" value="ProtInc"/>
</dbReference>
<dbReference type="GO" id="GO:0045165">
    <property type="term" value="P:cell fate commitment"/>
    <property type="evidence" value="ECO:0007669"/>
    <property type="project" value="Ensembl"/>
</dbReference>
<dbReference type="GO" id="GO:0030855">
    <property type="term" value="P:epithelial cell differentiation"/>
    <property type="evidence" value="ECO:0007669"/>
    <property type="project" value="Ensembl"/>
</dbReference>
<dbReference type="GO" id="GO:0045444">
    <property type="term" value="P:fat cell differentiation"/>
    <property type="evidence" value="ECO:0007669"/>
    <property type="project" value="Ensembl"/>
</dbReference>
<dbReference type="GO" id="GO:0016331">
    <property type="term" value="P:morphogenesis of embryonic epithelium"/>
    <property type="evidence" value="ECO:0007669"/>
    <property type="project" value="Ensembl"/>
</dbReference>
<dbReference type="GO" id="GO:0008285">
    <property type="term" value="P:negative regulation of cell population proliferation"/>
    <property type="evidence" value="ECO:0000304"/>
    <property type="project" value="ProtInc"/>
</dbReference>
<dbReference type="GO" id="GO:0045599">
    <property type="term" value="P:negative regulation of fat cell differentiation"/>
    <property type="evidence" value="ECO:0007669"/>
    <property type="project" value="Ensembl"/>
</dbReference>
<dbReference type="GO" id="GO:0045893">
    <property type="term" value="P:positive regulation of DNA-templated transcription"/>
    <property type="evidence" value="ECO:0000314"/>
    <property type="project" value="UniProtKB"/>
</dbReference>
<dbReference type="GO" id="GO:0010718">
    <property type="term" value="P:positive regulation of epithelial to mesenchymal transition"/>
    <property type="evidence" value="ECO:0000315"/>
    <property type="project" value="BHF-UCL"/>
</dbReference>
<dbReference type="GO" id="GO:0030511">
    <property type="term" value="P:positive regulation of transforming growth factor beta receptor signaling pathway"/>
    <property type="evidence" value="ECO:0000314"/>
    <property type="project" value="BHF-UCL"/>
</dbReference>
<dbReference type="GO" id="GO:2000060">
    <property type="term" value="P:positive regulation of ubiquitin-dependent protein catabolic process"/>
    <property type="evidence" value="ECO:0000314"/>
    <property type="project" value="BHF-UCL"/>
</dbReference>
<dbReference type="GO" id="GO:0016055">
    <property type="term" value="P:Wnt signaling pathway"/>
    <property type="evidence" value="ECO:0007669"/>
    <property type="project" value="UniProtKB-KW"/>
</dbReference>
<dbReference type="CDD" id="cd09336">
    <property type="entry name" value="LIM1_Paxillin_like"/>
    <property type="match status" value="1"/>
</dbReference>
<dbReference type="CDD" id="cd09337">
    <property type="entry name" value="LIM2_Paxillin_like"/>
    <property type="match status" value="1"/>
</dbReference>
<dbReference type="CDD" id="cd09409">
    <property type="entry name" value="LIM3_Paxillin"/>
    <property type="match status" value="1"/>
</dbReference>
<dbReference type="CDD" id="cd09412">
    <property type="entry name" value="LIM4_Leupaxin"/>
    <property type="match status" value="1"/>
</dbReference>
<dbReference type="FunFam" id="2.10.110.10:FF:000009">
    <property type="entry name" value="Paxillin isoform 1"/>
    <property type="match status" value="1"/>
</dbReference>
<dbReference type="FunFam" id="2.10.110.10:FF:000012">
    <property type="entry name" value="Paxillin isoform 1"/>
    <property type="match status" value="1"/>
</dbReference>
<dbReference type="FunFam" id="2.10.110.10:FF:000018">
    <property type="entry name" value="Paxillin isoform 1"/>
    <property type="match status" value="1"/>
</dbReference>
<dbReference type="FunFam" id="2.10.110.10:FF:000084">
    <property type="entry name" value="transforming growth factor beta-1-induced transcript 1 protein"/>
    <property type="match status" value="1"/>
</dbReference>
<dbReference type="Gene3D" id="2.10.110.10">
    <property type="entry name" value="Cysteine Rich Protein"/>
    <property type="match status" value="4"/>
</dbReference>
<dbReference type="InterPro" id="IPR047075">
    <property type="entry name" value="Paxillin_TGFB1I1_LIM_dom1"/>
</dbReference>
<dbReference type="InterPro" id="IPR017305">
    <property type="entry name" value="Tgfb1i1/Leupaxin/TGFB1I1"/>
</dbReference>
<dbReference type="InterPro" id="IPR001781">
    <property type="entry name" value="Znf_LIM"/>
</dbReference>
<dbReference type="PANTHER" id="PTHR24216">
    <property type="entry name" value="PAXILLIN-RELATED"/>
    <property type="match status" value="1"/>
</dbReference>
<dbReference type="PANTHER" id="PTHR24216:SF27">
    <property type="entry name" value="TRANSFORMING GROWTH FACTOR BETA-1-INDUCED TRANSCRIPT 1 PROTEIN"/>
    <property type="match status" value="1"/>
</dbReference>
<dbReference type="Pfam" id="PF00412">
    <property type="entry name" value="LIM"/>
    <property type="match status" value="4"/>
</dbReference>
<dbReference type="Pfam" id="PF03535">
    <property type="entry name" value="Paxillin"/>
    <property type="match status" value="1"/>
</dbReference>
<dbReference type="PIRSF" id="PIRSF037881">
    <property type="entry name" value="Leupaxin"/>
    <property type="match status" value="1"/>
</dbReference>
<dbReference type="SMART" id="SM00132">
    <property type="entry name" value="LIM"/>
    <property type="match status" value="4"/>
</dbReference>
<dbReference type="SUPFAM" id="SSF57716">
    <property type="entry name" value="Glucocorticoid receptor-like (DNA-binding domain)"/>
    <property type="match status" value="5"/>
</dbReference>
<dbReference type="PROSITE" id="PS00478">
    <property type="entry name" value="LIM_DOMAIN_1"/>
    <property type="match status" value="4"/>
</dbReference>
<dbReference type="PROSITE" id="PS50023">
    <property type="entry name" value="LIM_DOMAIN_2"/>
    <property type="match status" value="4"/>
</dbReference>
<organism>
    <name type="scientific">Homo sapiens</name>
    <name type="common">Human</name>
    <dbReference type="NCBI Taxonomy" id="9606"/>
    <lineage>
        <taxon>Eukaryota</taxon>
        <taxon>Metazoa</taxon>
        <taxon>Chordata</taxon>
        <taxon>Craniata</taxon>
        <taxon>Vertebrata</taxon>
        <taxon>Euteleostomi</taxon>
        <taxon>Mammalia</taxon>
        <taxon>Eutheria</taxon>
        <taxon>Euarchontoglires</taxon>
        <taxon>Primates</taxon>
        <taxon>Haplorrhini</taxon>
        <taxon>Catarrhini</taxon>
        <taxon>Hominidae</taxon>
        <taxon>Homo</taxon>
    </lineage>
</organism>
<evidence type="ECO:0000250" key="1"/>
<evidence type="ECO:0000250" key="2">
    <source>
        <dbReference type="UniProtKB" id="Q62219"/>
    </source>
</evidence>
<evidence type="ECO:0000250" key="3">
    <source>
        <dbReference type="UniProtKB" id="Q99PD6"/>
    </source>
</evidence>
<evidence type="ECO:0000255" key="4">
    <source>
        <dbReference type="PROSITE-ProRule" id="PRU00125"/>
    </source>
</evidence>
<evidence type="ECO:0000256" key="5">
    <source>
        <dbReference type="SAM" id="MobiDB-lite"/>
    </source>
</evidence>
<evidence type="ECO:0000269" key="6">
    <source>
    </source>
</evidence>
<evidence type="ECO:0000269" key="7">
    <source>
    </source>
</evidence>
<evidence type="ECO:0000269" key="8">
    <source>
    </source>
</evidence>
<evidence type="ECO:0000269" key="9">
    <source>
    </source>
</evidence>
<evidence type="ECO:0000269" key="10">
    <source>
    </source>
</evidence>
<evidence type="ECO:0000269" key="11">
    <source>
    </source>
</evidence>
<evidence type="ECO:0000269" key="12">
    <source>
    </source>
</evidence>
<evidence type="ECO:0000269" key="13">
    <source>
    </source>
</evidence>
<evidence type="ECO:0000269" key="14">
    <source>
    </source>
</evidence>
<evidence type="ECO:0000269" key="15">
    <source>
    </source>
</evidence>
<evidence type="ECO:0000269" key="16">
    <source>
    </source>
</evidence>
<evidence type="ECO:0000269" key="17">
    <source>
    </source>
</evidence>
<evidence type="ECO:0000269" key="18">
    <source>
    </source>
</evidence>
<evidence type="ECO:0000269" key="19">
    <source>
    </source>
</evidence>
<evidence type="ECO:0000269" key="20">
    <source>
    </source>
</evidence>
<evidence type="ECO:0000269" key="21">
    <source>
    </source>
</evidence>
<evidence type="ECO:0000269" key="22">
    <source>
    </source>
</evidence>
<evidence type="ECO:0000269" key="23">
    <source>
    </source>
</evidence>
<evidence type="ECO:0000269" key="24">
    <source>
    </source>
</evidence>
<evidence type="ECO:0000269" key="25">
    <source>
    </source>
</evidence>
<evidence type="ECO:0000269" key="26">
    <source>
    </source>
</evidence>
<evidence type="ECO:0000269" key="27">
    <source>
    </source>
</evidence>
<evidence type="ECO:0000269" key="28">
    <source>
    </source>
</evidence>
<evidence type="ECO:0000269" key="29">
    <source>
    </source>
</evidence>
<evidence type="ECO:0000269" key="30">
    <source>
    </source>
</evidence>
<evidence type="ECO:0000269" key="31">
    <source>
    </source>
</evidence>
<evidence type="ECO:0000269" key="32">
    <source>
    </source>
</evidence>
<evidence type="ECO:0000269" key="33">
    <source>
    </source>
</evidence>
<evidence type="ECO:0000269" key="34">
    <source>
    </source>
</evidence>
<evidence type="ECO:0000269" key="35">
    <source>
    </source>
</evidence>
<evidence type="ECO:0000269" key="36">
    <source>
    </source>
</evidence>
<evidence type="ECO:0000269" key="37">
    <source ref="2"/>
</evidence>
<evidence type="ECO:0000303" key="38">
    <source>
    </source>
</evidence>
<evidence type="ECO:0000303" key="39">
    <source>
    </source>
</evidence>
<evidence type="ECO:0000303" key="40">
    <source>
    </source>
</evidence>
<evidence type="ECO:0000305" key="41"/>
<evidence type="ECO:0007744" key="42">
    <source>
    </source>
</evidence>
<evidence type="ECO:0007744" key="43">
    <source>
    </source>
</evidence>
<evidence type="ECO:0007744" key="44">
    <source>
    </source>
</evidence>
<evidence type="ECO:0007744" key="45">
    <source>
    </source>
</evidence>
<evidence type="ECO:0007744" key="46">
    <source>
    </source>
</evidence>
<evidence type="ECO:0007744" key="47">
    <source>
    </source>
</evidence>
<proteinExistence type="evidence at protein level"/>
<protein>
    <recommendedName>
        <fullName>Transforming growth factor beta-1-induced transcript 1 protein</fullName>
    </recommendedName>
    <alternativeName>
        <fullName>Androgen receptor coactivator 55 kDa protein</fullName>
    </alternativeName>
    <alternativeName>
        <fullName>Androgen receptor-associated protein of 55 kDa</fullName>
    </alternativeName>
    <alternativeName>
        <fullName>Hydrogen peroxide-inducible clone 5 protein</fullName>
        <shortName>Hic-5</shortName>
    </alternativeName>
</protein>
<accession>O43294</accession>
<accession>B2R8D5</accession>
<accession>Q9BPW3</accession>
<accession>Q9Y2V5</accession>
<name>TGFI1_HUMAN</name>
<feature type="chain" id="PRO_0000291582" description="Transforming growth factor beta-1-induced transcript 1 protein">
    <location>
        <begin position="1"/>
        <end position="461"/>
    </location>
</feature>
<feature type="domain" description="LIM zinc-binding 1" evidence="4">
    <location>
        <begin position="226"/>
        <end position="285"/>
    </location>
</feature>
<feature type="domain" description="LIM zinc-binding 2" evidence="4">
    <location>
        <begin position="286"/>
        <end position="343"/>
    </location>
</feature>
<feature type="domain" description="LIM zinc-binding 3" evidence="4">
    <location>
        <begin position="344"/>
        <end position="403"/>
    </location>
</feature>
<feature type="domain" description="LIM zinc-binding 4" evidence="4">
    <location>
        <begin position="404"/>
        <end position="461"/>
    </location>
</feature>
<feature type="region of interest" description="Interaction with PTK2B/PYK2">
    <location>
        <begin position="1"/>
        <end position="240"/>
    </location>
</feature>
<feature type="region of interest" description="Transcription activation" evidence="1">
    <location>
        <begin position="1"/>
        <end position="200"/>
    </location>
</feature>
<feature type="region of interest" description="Disordered" evidence="5">
    <location>
        <begin position="1"/>
        <end position="87"/>
    </location>
</feature>
<feature type="region of interest" description="Interaction with PTK2/FAK1" evidence="1">
    <location>
        <begin position="83"/>
        <end position="136"/>
    </location>
</feature>
<feature type="region of interest" description="Disordered" evidence="5">
    <location>
        <begin position="116"/>
        <end position="152"/>
    </location>
</feature>
<feature type="region of interest" description="Disordered" evidence="5">
    <location>
        <begin position="172"/>
        <end position="205"/>
    </location>
</feature>
<feature type="short sequence motif" description="LD motif 1">
    <location>
        <begin position="3"/>
        <end position="15"/>
    </location>
</feature>
<feature type="short sequence motif" description="LD motif 2">
    <location>
        <begin position="92"/>
        <end position="104"/>
    </location>
</feature>
<feature type="short sequence motif" description="LD motif 3">
    <location>
        <begin position="157"/>
        <end position="168"/>
    </location>
</feature>
<feature type="short sequence motif" description="LD motif 4">
    <location>
        <begin position="203"/>
        <end position="215"/>
    </location>
</feature>
<feature type="compositionally biased region" description="Polar residues" evidence="5">
    <location>
        <begin position="40"/>
        <end position="52"/>
    </location>
</feature>
<feature type="compositionally biased region" description="Basic and acidic residues" evidence="5">
    <location>
        <begin position="124"/>
        <end position="135"/>
    </location>
</feature>
<feature type="compositionally biased region" description="Polar residues" evidence="5">
    <location>
        <begin position="183"/>
        <end position="192"/>
    </location>
</feature>
<feature type="modified residue" description="N-acetylmethionine" evidence="45">
    <location>
        <position position="1"/>
    </location>
</feature>
<feature type="modified residue" description="Phosphothreonine" evidence="43 47">
    <location>
        <position position="33"/>
    </location>
</feature>
<feature type="modified residue" description="Phosphotyrosine" evidence="2">
    <location>
        <position position="38"/>
    </location>
</feature>
<feature type="modified residue" description="Phosphotyrosine; by FAK2 and FYN" evidence="8 13">
    <location>
        <position position="60"/>
    </location>
</feature>
<feature type="modified residue" description="Phosphoserine" evidence="42 47">
    <location>
        <position position="68"/>
    </location>
</feature>
<feature type="modified residue" description="Phosphoserine" evidence="44 46 47">
    <location>
        <position position="137"/>
    </location>
</feature>
<feature type="modified residue" description="Phosphoserine" evidence="47">
    <location>
        <position position="140"/>
    </location>
</feature>
<feature type="modified residue" description="Phosphoserine" evidence="46">
    <location>
        <position position="141"/>
    </location>
</feature>
<feature type="modified residue" description="Phosphoserine" evidence="47">
    <location>
        <position position="143"/>
    </location>
</feature>
<feature type="modified residue" description="Phosphoserine" evidence="46">
    <location>
        <position position="164"/>
    </location>
</feature>
<feature type="modified residue" description="Phosphoserine" evidence="2">
    <location>
        <position position="186"/>
    </location>
</feature>
<feature type="modified residue" description="Phosphothreonine" evidence="2">
    <location>
        <position position="188"/>
    </location>
</feature>
<feature type="modified residue" description="Phosphoserine" evidence="46 47">
    <location>
        <position position="192"/>
    </location>
</feature>
<feature type="modified residue" description="Phosphoserine" evidence="46">
    <location>
        <position position="194"/>
    </location>
</feature>
<feature type="modified residue" description="Phosphoserine" evidence="47">
    <location>
        <position position="403"/>
    </location>
</feature>
<feature type="modified residue" description="Phosphothreonine" evidence="47">
    <location>
        <position position="407"/>
    </location>
</feature>
<feature type="splice variant" id="VSP_026183" description="In isoform 2." evidence="38 39 40">
    <location>
        <begin position="1"/>
        <end position="17"/>
    </location>
</feature>
<feature type="sequence variant" id="VAR_032831" description="In dbSNP:rs45475699." evidence="37">
    <original>Q</original>
    <variation>H</variation>
    <location>
        <position position="129"/>
    </location>
</feature>
<feature type="mutagenesis site" description="Prevents phosphorylation by FAK2 and FYN. Prevents interaction with CSK." evidence="8">
    <original>Y</original>
    <variation>F</variation>
    <location>
        <position position="60"/>
    </location>
</feature>
<feature type="mutagenesis site" description="Abolishes interaction with CBLC and enhancement of CBLC E3 ubiquitin-protein ligase activity." evidence="32">
    <original>C</original>
    <variation>A</variation>
    <location>
        <position position="287"/>
    </location>
</feature>
<feature type="mutagenesis site" description="No effect on interaction with CBLC." evidence="32">
    <original>C</original>
    <variation>A</variation>
    <location>
        <position position="313"/>
    </location>
</feature>
<feature type="mutagenesis site" description="Loss of interaction with AR; when associated with 456-A--A-460." evidence="19">
    <original>FLQLF</original>
    <variation>ALQAA</variation>
    <location>
        <begin position="338"/>
        <end position="342"/>
    </location>
</feature>
<feature type="mutagenesis site" description="Loss of AR coactivation; when associated with S-372." evidence="26">
    <original>C</original>
    <variation>S</variation>
    <location>
        <position position="369"/>
    </location>
</feature>
<feature type="mutagenesis site" description="Loss of AR coactivation; when associated with S-369." evidence="26">
    <original>C</original>
    <variation>S</variation>
    <location>
        <position position="372"/>
    </location>
</feature>
<feature type="mutagenesis site" description="Loss of AR coactivation; when associated with S-431." evidence="26">
    <original>H</original>
    <variation>S</variation>
    <location>
        <position position="428"/>
    </location>
</feature>
<feature type="mutagenesis site" description="Loss of AR coactivation; when associated with S-428." evidence="26">
    <original>C</original>
    <variation>S</variation>
    <location>
        <position position="431"/>
    </location>
</feature>
<feature type="mutagenesis site" description="Loss of interaction with AR; when associated with 338-A--A-342." evidence="19">
    <original>FLKLF</original>
    <variation>ALKAA</variation>
    <location>
        <begin position="456"/>
        <end position="460"/>
    </location>
</feature>
<feature type="sequence conflict" description="In Ref. 1; AAD22552." evidence="41" ref="1">
    <original>S</original>
    <variation>P</variation>
    <location>
        <position position="166"/>
    </location>
</feature>
<feature type="sequence conflict" description="In Ref. 1; AAD22552." evidence="41" ref="1">
    <original>G</original>
    <variation>A</variation>
    <location>
        <position position="200"/>
    </location>
</feature>
<feature type="sequence conflict" description="In Ref. 1; AAD22552." evidence="41" ref="1">
    <original>A</original>
    <variation>L</variation>
    <location>
        <position position="363"/>
    </location>
</feature>
<feature type="sequence conflict" description="In Ref. 1; AAD22552." evidence="41" ref="1">
    <original>CA</original>
    <variation>WP</variation>
    <location>
        <begin position="405"/>
        <end position="406"/>
    </location>
</feature>
<feature type="sequence conflict" description="In Ref. 1; AAD22552." evidence="41" ref="1">
    <original>T</original>
    <variation>A</variation>
    <location>
        <position position="430"/>
    </location>
</feature>
<keyword id="KW-0007">Acetylation</keyword>
<keyword id="KW-0010">Activator</keyword>
<keyword id="KW-0025">Alternative splicing</keyword>
<keyword id="KW-0965">Cell junction</keyword>
<keyword id="KW-0963">Cytoplasm</keyword>
<keyword id="KW-0206">Cytoskeleton</keyword>
<keyword id="KW-0221">Differentiation</keyword>
<keyword id="KW-0440">LIM domain</keyword>
<keyword id="KW-0479">Metal-binding</keyword>
<keyword id="KW-0539">Nucleus</keyword>
<keyword id="KW-0597">Phosphoprotein</keyword>
<keyword id="KW-1267">Proteomics identification</keyword>
<keyword id="KW-1185">Reference proteome</keyword>
<keyword id="KW-0677">Repeat</keyword>
<keyword id="KW-0879">Wnt signaling pathway</keyword>
<keyword id="KW-0862">Zinc</keyword>
<reference key="1">
    <citation type="journal article" date="1999" name="J. Biol. Chem.">
        <title>Cloning and characterization of androgen receptor coactivator, ARA55, in human prostate.</title>
        <authorList>
            <person name="Fujimoto N."/>
            <person name="Yeh S."/>
            <person name="Kang H.-Y."/>
            <person name="Inui S."/>
            <person name="Chang H.-C."/>
            <person name="Mizokami A."/>
            <person name="Chang C."/>
        </authorList>
    </citation>
    <scope>NUCLEOTIDE SEQUENCE [MRNA] (ISOFORM 2)</scope>
    <scope>FUNCTION</scope>
    <scope>INTERACTION WITH AR</scope>
    <scope>TISSUE SPECIFICITY</scope>
    <source>
        <tissue>Cervix carcinoma</tissue>
    </source>
</reference>
<reference key="2">
    <citation type="submission" date="2005-11" db="EMBL/GenBank/DDBJ databases">
        <authorList>
            <consortium name="NIEHS SNPs program"/>
        </authorList>
    </citation>
    <scope>NUCLEOTIDE SEQUENCE [GENOMIC DNA]</scope>
    <scope>VARIANT HIS-129</scope>
</reference>
<reference key="3">
    <citation type="journal article" date="2004" name="Nat. Genet.">
        <title>Complete sequencing and characterization of 21,243 full-length human cDNAs.</title>
        <authorList>
            <person name="Ota T."/>
            <person name="Suzuki Y."/>
            <person name="Nishikawa T."/>
            <person name="Otsuki T."/>
            <person name="Sugiyama T."/>
            <person name="Irie R."/>
            <person name="Wakamatsu A."/>
            <person name="Hayashi K."/>
            <person name="Sato H."/>
            <person name="Nagai K."/>
            <person name="Kimura K."/>
            <person name="Makita H."/>
            <person name="Sekine M."/>
            <person name="Obayashi M."/>
            <person name="Nishi T."/>
            <person name="Shibahara T."/>
            <person name="Tanaka T."/>
            <person name="Ishii S."/>
            <person name="Yamamoto J."/>
            <person name="Saito K."/>
            <person name="Kawai Y."/>
            <person name="Isono Y."/>
            <person name="Nakamura Y."/>
            <person name="Nagahari K."/>
            <person name="Murakami K."/>
            <person name="Yasuda T."/>
            <person name="Iwayanagi T."/>
            <person name="Wagatsuma M."/>
            <person name="Shiratori A."/>
            <person name="Sudo H."/>
            <person name="Hosoiri T."/>
            <person name="Kaku Y."/>
            <person name="Kodaira H."/>
            <person name="Kondo H."/>
            <person name="Sugawara M."/>
            <person name="Takahashi M."/>
            <person name="Kanda K."/>
            <person name="Yokoi T."/>
            <person name="Furuya T."/>
            <person name="Kikkawa E."/>
            <person name="Omura Y."/>
            <person name="Abe K."/>
            <person name="Kamihara K."/>
            <person name="Katsuta N."/>
            <person name="Sato K."/>
            <person name="Tanikawa M."/>
            <person name="Yamazaki M."/>
            <person name="Ninomiya K."/>
            <person name="Ishibashi T."/>
            <person name="Yamashita H."/>
            <person name="Murakawa K."/>
            <person name="Fujimori K."/>
            <person name="Tanai H."/>
            <person name="Kimata M."/>
            <person name="Watanabe M."/>
            <person name="Hiraoka S."/>
            <person name="Chiba Y."/>
            <person name="Ishida S."/>
            <person name="Ono Y."/>
            <person name="Takiguchi S."/>
            <person name="Watanabe S."/>
            <person name="Yosida M."/>
            <person name="Hotuta T."/>
            <person name="Kusano J."/>
            <person name="Kanehori K."/>
            <person name="Takahashi-Fujii A."/>
            <person name="Hara H."/>
            <person name="Tanase T.-O."/>
            <person name="Nomura Y."/>
            <person name="Togiya S."/>
            <person name="Komai F."/>
            <person name="Hara R."/>
            <person name="Takeuchi K."/>
            <person name="Arita M."/>
            <person name="Imose N."/>
            <person name="Musashino K."/>
            <person name="Yuuki H."/>
            <person name="Oshima A."/>
            <person name="Sasaki N."/>
            <person name="Aotsuka S."/>
            <person name="Yoshikawa Y."/>
            <person name="Matsunawa H."/>
            <person name="Ichihara T."/>
            <person name="Shiohata N."/>
            <person name="Sano S."/>
            <person name="Moriya S."/>
            <person name="Momiyama H."/>
            <person name="Satoh N."/>
            <person name="Takami S."/>
            <person name="Terashima Y."/>
            <person name="Suzuki O."/>
            <person name="Nakagawa S."/>
            <person name="Senoh A."/>
            <person name="Mizoguchi H."/>
            <person name="Goto Y."/>
            <person name="Shimizu F."/>
            <person name="Wakebe H."/>
            <person name="Hishigaki H."/>
            <person name="Watanabe T."/>
            <person name="Sugiyama A."/>
            <person name="Takemoto M."/>
            <person name="Kawakami B."/>
            <person name="Yamazaki M."/>
            <person name="Watanabe K."/>
            <person name="Kumagai A."/>
            <person name="Itakura S."/>
            <person name="Fukuzumi Y."/>
            <person name="Fujimori Y."/>
            <person name="Komiyama M."/>
            <person name="Tashiro H."/>
            <person name="Tanigami A."/>
            <person name="Fujiwara T."/>
            <person name="Ono T."/>
            <person name="Yamada K."/>
            <person name="Fujii Y."/>
            <person name="Ozaki K."/>
            <person name="Hirao M."/>
            <person name="Ohmori Y."/>
            <person name="Kawabata A."/>
            <person name="Hikiji T."/>
            <person name="Kobatake N."/>
            <person name="Inagaki H."/>
            <person name="Ikema Y."/>
            <person name="Okamoto S."/>
            <person name="Okitani R."/>
            <person name="Kawakami T."/>
            <person name="Noguchi S."/>
            <person name="Itoh T."/>
            <person name="Shigeta K."/>
            <person name="Senba T."/>
            <person name="Matsumura K."/>
            <person name="Nakajima Y."/>
            <person name="Mizuno T."/>
            <person name="Morinaga M."/>
            <person name="Sasaki M."/>
            <person name="Togashi T."/>
            <person name="Oyama M."/>
            <person name="Hata H."/>
            <person name="Watanabe M."/>
            <person name="Komatsu T."/>
            <person name="Mizushima-Sugano J."/>
            <person name="Satoh T."/>
            <person name="Shirai Y."/>
            <person name="Takahashi Y."/>
            <person name="Nakagawa K."/>
            <person name="Okumura K."/>
            <person name="Nagase T."/>
            <person name="Nomura N."/>
            <person name="Kikuchi H."/>
            <person name="Masuho Y."/>
            <person name="Yamashita R."/>
            <person name="Nakai K."/>
            <person name="Yada T."/>
            <person name="Nakamura Y."/>
            <person name="Ohara O."/>
            <person name="Isogai T."/>
            <person name="Sugano S."/>
        </authorList>
    </citation>
    <scope>NUCLEOTIDE SEQUENCE [LARGE SCALE MRNA] (ISOFORM 2)</scope>
    <source>
        <tissue>Testis</tissue>
    </source>
</reference>
<reference key="4">
    <citation type="submission" date="2005-07" db="EMBL/GenBank/DDBJ databases">
        <authorList>
            <person name="Mural R.J."/>
            <person name="Istrail S."/>
            <person name="Sutton G.G."/>
            <person name="Florea L."/>
            <person name="Halpern A.L."/>
            <person name="Mobarry C.M."/>
            <person name="Lippert R."/>
            <person name="Walenz B."/>
            <person name="Shatkay H."/>
            <person name="Dew I."/>
            <person name="Miller J.R."/>
            <person name="Flanigan M.J."/>
            <person name="Edwards N.J."/>
            <person name="Bolanos R."/>
            <person name="Fasulo D."/>
            <person name="Halldorsson B.V."/>
            <person name="Hannenhalli S."/>
            <person name="Turner R."/>
            <person name="Yooseph S."/>
            <person name="Lu F."/>
            <person name="Nusskern D.R."/>
            <person name="Shue B.C."/>
            <person name="Zheng X.H."/>
            <person name="Zhong F."/>
            <person name="Delcher A.L."/>
            <person name="Huson D.H."/>
            <person name="Kravitz S.A."/>
            <person name="Mouchard L."/>
            <person name="Reinert K."/>
            <person name="Remington K.A."/>
            <person name="Clark A.G."/>
            <person name="Waterman M.S."/>
            <person name="Eichler E.E."/>
            <person name="Adams M.D."/>
            <person name="Hunkapiller M.W."/>
            <person name="Myers E.W."/>
            <person name="Venter J.C."/>
        </authorList>
    </citation>
    <scope>NUCLEOTIDE SEQUENCE [LARGE SCALE GENOMIC DNA]</scope>
</reference>
<reference key="5">
    <citation type="journal article" date="2004" name="Genome Res.">
        <title>The status, quality, and expansion of the NIH full-length cDNA project: the Mammalian Gene Collection (MGC).</title>
        <authorList>
            <consortium name="The MGC Project Team"/>
        </authorList>
    </citation>
    <scope>NUCLEOTIDE SEQUENCE [LARGE SCALE MRNA] (ISOFORM 2)</scope>
    <scope>NUCLEOTIDE SEQUENCE [LARGE SCALE MRNA] OF 3-461 (ISOFORM 1)</scope>
    <source>
        <tissue>Muscle</tissue>
        <tissue>Ovary</tissue>
        <tissue>Uterus</tissue>
    </source>
</reference>
<reference key="6">
    <citation type="journal article" date="1998" name="J. Biol. Chem.">
        <title>Cell adhesion kinase beta forms a complex with a new member, Hic-5, of proteins localized at focal adhesions.</title>
        <authorList>
            <person name="Matsuya M."/>
            <person name="Sasaki H."/>
            <person name="Aoto H."/>
            <person name="Mitaka T."/>
            <person name="Nagura K."/>
            <person name="Ohba T."/>
            <person name="Ishino M."/>
            <person name="Takahashi S."/>
            <person name="Suzuki R."/>
            <person name="Sasaki T."/>
        </authorList>
    </citation>
    <scope>NUCLEOTIDE SEQUENCE [MRNA] OF 2-461 (ISOFORM 1)</scope>
    <scope>INTERACTION WITH PTK2 AND PTK2B</scope>
    <source>
        <tissue>Hippocampus</tissue>
    </source>
</reference>
<reference key="7">
    <citation type="journal article" date="1997" name="Mol. Cell. Biol.">
        <title>Induction of senescence-like phenotypes by forced expression of hic-5, which encodes a novel LIM motif protein, in immortalized human fibroblasts.</title>
        <authorList>
            <person name="Shibanuma M."/>
            <person name="Mochizuki E."/>
            <person name="Maniwa R."/>
            <person name="Mashimo J.I."/>
            <person name="Nishiya N."/>
            <person name="Imai S."/>
            <person name="Takano T."/>
            <person name="Oshimura M."/>
            <person name="Nose K."/>
        </authorList>
    </citation>
    <scope>FUNCTION</scope>
</reference>
<reference key="8">
    <citation type="journal article" date="1998" name="J. Biol. Chem.">
        <title>Interaction of Hic-5, A senescence-related protein, with focal adhesion kinase.</title>
        <authorList>
            <person name="Fujita H."/>
            <person name="Kamiguchi K."/>
            <person name="Cho D."/>
            <person name="Shibanuma M."/>
            <person name="Morimoto C."/>
            <person name="Tachibana K."/>
        </authorList>
    </citation>
    <scope>INTERACTION WITH PTK2</scope>
</reference>
<reference key="9">
    <citation type="journal article" date="1998" name="J. Cell Sci.">
        <title>Recruitment of the LIM protein hic-5 to focal contacts of human platelets.</title>
        <authorList>
            <person name="Hagmann J."/>
            <person name="Grob M."/>
            <person name="Welman A."/>
            <person name="van Willigen G."/>
            <person name="Burger M.M."/>
        </authorList>
    </citation>
    <scope>INTERACTION WITH PTK2 AND TALIN</scope>
    <scope>TISSUE SPECIFICITY</scope>
    <scope>SUBCELLULAR LOCATION</scope>
</reference>
<reference key="10">
    <citation type="journal article" date="2000" name="FEBS Lett.">
        <title>Phosphorylation of Hic-5 at tyrosine 60 by CAKbeta and Fyn.</title>
        <authorList>
            <person name="Ishino M."/>
            <person name="Aoto H."/>
            <person name="Sasaski H."/>
            <person name="Suzuki R."/>
            <person name="Sasaki T."/>
        </authorList>
    </citation>
    <scope>MUTAGENESIS OF TYR-60</scope>
    <scope>PHOSPHORYLATION AT TYR-60</scope>
    <scope>INTERACTION WITH CSK AND PTK2B</scope>
</reference>
<reference key="11">
    <citation type="journal article" date="2000" name="Mol. Carcinog.">
        <title>Molecular cloning of human Hic-5, a potential regulator involved in signal transduction and cellular senescence.</title>
        <authorList>
            <person name="Zhang J."/>
            <person name="Zhang L.-X."/>
            <person name="Meltzer P.S."/>
            <person name="Barrett J.C."/>
            <person name="Trent J.M."/>
        </authorList>
    </citation>
    <scope>TISSUE SPECIFICITY</scope>
</reference>
<reference key="12">
    <citation type="journal article" date="2001" name="Biochem. J.">
        <title>Involvement of Hic-5 in platelet activation: integrin alphaIIbbeta3-dependent tyrosine phosphorylation and association with proline-rich tyrosine kinase 2.</title>
        <authorList>
            <person name="Osada M."/>
            <person name="Ohmori T."/>
            <person name="Yatomi Y."/>
            <person name="Satoh K."/>
            <person name="Hosogaya S."/>
            <person name="Ozaki Y."/>
        </authorList>
    </citation>
    <scope>TISSUE SPECIFICITY</scope>
    <scope>PHOSPHORYLATION</scope>
    <scope>INTERACTION WITH PTK2B</scope>
    <scope>SUBCELLULAR LOCATION</scope>
</reference>
<reference key="13">
    <citation type="journal article" date="2001" name="Blood">
        <title>CrkL is an adapter for Wiskott-Aldrich syndrome protein and Syk.</title>
        <authorList>
            <person name="Oda A."/>
            <person name="Ochs H.D."/>
            <person name="Lasky L.A."/>
            <person name="Spencer S."/>
            <person name="Ozaki K."/>
            <person name="Fujihara M."/>
            <person name="Handa M."/>
            <person name="Ikebuchi K."/>
            <person name="Ikeda H."/>
        </authorList>
    </citation>
    <scope>SUBCELLULAR LOCATION</scope>
</reference>
<reference key="14">
    <citation type="journal article" date="2001" name="J. Dermatol. Sci.">
        <title>Potential anti-androgenic activity of roxithromycin in skin.</title>
        <authorList>
            <person name="Inui S."/>
            <person name="Nakajima T."/>
            <person name="Fukuzato Y."/>
            <person name="Fujimoto N."/>
            <person name="Chang C."/>
            <person name="Yoshikawa K."/>
            <person name="Itami S."/>
        </authorList>
    </citation>
    <scope>INDUCTION BY HYDROGEN PEROXIDE</scope>
</reference>
<reference key="15">
    <citation type="journal article" date="2001" name="Mol. Cell. Biol.">
        <title>Hic-5-reduced cell spreading on fibronectin: competitive effects between paxillin and Hic-5 through interaction with focal adhesion kinase.</title>
        <authorList>
            <person name="Nishiya N."/>
            <person name="Tachibana K."/>
            <person name="Shibanuma M."/>
            <person name="Mashimo J.I."/>
            <person name="Nose K."/>
        </authorList>
    </citation>
    <scope>FUNCTION</scope>
</reference>
<reference key="16">
    <citation type="journal article" date="2001" name="Urology">
        <title>Different expression of androgen receptor coactivators in human prostate.</title>
        <authorList>
            <person name="Fujimoto N."/>
            <person name="Mizokami A."/>
            <person name="Harada S."/>
            <person name="Matsumoto T."/>
        </authorList>
    </citation>
    <scope>INDUCTION BY TNF</scope>
</reference>
<reference key="17">
    <citation type="journal article" date="2002" name="Biochem. Biophys. Res. Commun.">
        <title>Transcriptional activation of the c-fos gene by a LIM protein, Hic-5.</title>
        <authorList>
            <person name="Kim-Kaneyama J.-R."/>
            <person name="Shibanuma M."/>
            <person name="Nose K."/>
        </authorList>
    </citation>
    <scope>FUNCTION</scope>
</reference>
<reference key="18">
    <citation type="journal article" date="2002" name="J. Biochem.">
        <title>Hic-5 interacts with GIT1 with a different binding mode from paxillin.</title>
        <authorList>
            <person name="Nishiya N."/>
            <person name="Shirai T."/>
            <person name="Suzuki W."/>
            <person name="Nose K."/>
        </authorList>
    </citation>
    <scope>INTERACTION WITH GIT1</scope>
</reference>
<reference key="19">
    <citation type="journal article" date="2002" name="J. Biol. Chem.">
        <title>Suppression of androgen receptor transactivation by Pyk2 via interaction and phosphorylation of the ARA55 coregulator.</title>
        <authorList>
            <person name="Wang X."/>
            <person name="Yang Y."/>
            <person name="Guo X."/>
            <person name="Sampson E.R."/>
            <person name="Hsu C.-L."/>
            <person name="Tsai M.-Y."/>
            <person name="Yeh S."/>
            <person name="Wu G."/>
            <person name="Guo Y."/>
            <person name="Chang C."/>
        </authorList>
    </citation>
    <scope>FUNCTION</scope>
    <scope>INTERACTION WITH PTK2B</scope>
    <scope>PHOSPHORYLATION AT TYR-60 BY FAK2</scope>
</reference>
<reference key="20">
    <citation type="journal article" date="2002" name="J. Neurosci.">
        <title>The multiple LIM domain-containing adaptor protein Hic-5 synaptically colocalizes and interacts with the dopamine transporter.</title>
        <authorList>
            <person name="Carneiro A.M.D."/>
            <person name="Ingram S.L."/>
            <person name="Beaulieu J.-M."/>
            <person name="Sweeney A."/>
            <person name="Amara S.G."/>
            <person name="Thomas S.M."/>
            <person name="Caron M.G."/>
            <person name="Torres G.E."/>
        </authorList>
    </citation>
    <scope>FUNCTION</scope>
    <scope>INTERACTION WITH SLC6A3</scope>
    <scope>SUBCELLULAR LOCATION</scope>
</reference>
<reference key="21">
    <citation type="journal article" date="2003" name="J. Biol. Chem.">
        <title>The use of phage display technique for the isolation of androgen receptor interacting peptides with (F/W)XXL(F/W) and FXXLY new signature motifs.</title>
        <authorList>
            <person name="Hsu C.-L."/>
            <person name="Chen Y.-L."/>
            <person name="Yeh S."/>
            <person name="Ting H.-J."/>
            <person name="Hu Y.-C."/>
            <person name="Lin H."/>
            <person name="Wang X."/>
            <person name="Chang C."/>
        </authorList>
    </citation>
    <scope>INTERACTION WITH AR</scope>
    <scope>MUTAGENESIS OF 338-PHE--PHE-342 AND 456-PHE--PHE-460</scope>
</reference>
<reference key="22">
    <citation type="journal article" date="2003" name="J. Histochem. Cytochem.">
        <title>Expression of the LIM proteins paxillin and Hic-5 in human tissues.</title>
        <authorList>
            <person name="Yuminamochi T."/>
            <person name="Yatomi Y."/>
            <person name="Osada M."/>
            <person name="Ohmori T."/>
            <person name="Ishii Y."/>
            <person name="Nakazawa K."/>
            <person name="Hosogaya S."/>
            <person name="Ozaki Y."/>
        </authorList>
    </citation>
    <scope>TISSUE SPECIFICITY</scope>
</reference>
<reference key="23">
    <citation type="journal article" date="2003" name="Mol. Biol. Cell">
        <title>Hic-5 communicates between focal adhesions and the nucleus through oxidant-sensitive nuclear export signal.</title>
        <authorList>
            <person name="Shibanuma M."/>
            <person name="Kim-Kaneyama J.-R."/>
            <person name="Ishino K."/>
            <person name="Sakamoto N."/>
            <person name="Hishiki T."/>
            <person name="Yamaguchi K."/>
            <person name="Mori K."/>
            <person name="Mashimo J.I."/>
            <person name="Nose K."/>
        </authorList>
    </citation>
    <scope>SUBCELLULAR LOCATION</scope>
</reference>
<reference key="24">
    <citation type="journal article" date="2003" name="Proc. Natl. Acad. Sci. U.S.A.">
        <title>Inactivation of androgen receptor coregulator ARA55 inhibits androgen receptor activity and agonist effect of antiandrogens in prostate cancer cells.</title>
        <authorList>
            <person name="Rahman M.M."/>
            <person name="Miyamoto H."/>
            <person name="Lardy H."/>
            <person name="Chang C."/>
        </authorList>
    </citation>
    <scope>FUNCTION</scope>
    <scope>INTERACTION WITH AR</scope>
</reference>
<reference key="25">
    <citation type="journal article" date="2003" name="Prostate">
        <title>Expression of androgen receptor coactivators in normal and cancer prostate tissues and cultured cell lines.</title>
        <authorList>
            <person name="Mestayer C."/>
            <person name="Blanchere M."/>
            <person name="Jaubert F."/>
            <person name="Dufour B."/>
            <person name="Mowszowicz I."/>
        </authorList>
    </citation>
    <scope>TISSUE SPECIFICITY</scope>
</reference>
<reference key="26">
    <citation type="journal article" date="2004" name="J. Cell. Biochem.">
        <title>Distinct LIM domains of Hic-5/ARA55 are required for nuclear matrix targeting and glucocorticoid receptor binding and coactivation.</title>
        <authorList>
            <person name="Guerrero-Santoro J."/>
            <person name="Yang L."/>
            <person name="Stallcup M.R."/>
            <person name="DeFranco D.B."/>
        </authorList>
    </citation>
    <scope>FUNCTION</scope>
    <scope>INTERACTION WITH NR3C1</scope>
    <scope>SUBCELLULAR LOCATION</scope>
</reference>
<reference key="27">
    <citation type="journal article" date="2005" name="Genes Dev.">
        <title>Hic-5 regulates an epithelial program mediated by PPARgamma.</title>
        <authorList>
            <person name="Drori S."/>
            <person name="Girnun G.D."/>
            <person name="Tou L."/>
            <person name="Szwaya J.D."/>
            <person name="Mueller E."/>
            <person name="Xia K."/>
            <person name="Shivdasani R.A."/>
            <person name="Spiegelman B.M."/>
        </authorList>
    </citation>
    <scope>INTERACTION WITH PPARG</scope>
</reference>
<reference key="28">
    <citation type="journal article" date="2005" name="J. Biol. Chem.">
        <title>Novel function of androgen receptor-associated protein 55/Hic-5 as a negative regulator of Smad3 signaling.</title>
        <authorList>
            <person name="Wang H."/>
            <person name="Song K."/>
            <person name="Sponseller T.L."/>
            <person name="Danielpour D."/>
        </authorList>
    </citation>
    <scope>FUNCTION</scope>
    <scope>INTERACTION WITH SMAD3</scope>
</reference>
<reference key="29">
    <citation type="journal article" date="2005" name="J. Cell Biol.">
        <title>Subcellular targeting of oxidants during endothelial cell migration.</title>
        <authorList>
            <person name="Wu R.F."/>
            <person name="Xu Y.C."/>
            <person name="Ma Z."/>
            <person name="Nwariaku F.E."/>
            <person name="Sarosi G.A. Jr."/>
            <person name="Terada L.S."/>
        </authorList>
    </citation>
    <scope>INTERACTION WITH TRAF4</scope>
</reference>
<reference key="30">
    <citation type="journal article" date="2006" name="Cancer Res.">
        <title>Hic-5/ARA55, a LIM domain-containing nuclear receptor coactivator expressed in prostate stromal cells.</title>
        <authorList>
            <person name="Heitzer M.D."/>
            <person name="DeFranco D.B."/>
        </authorList>
    </citation>
    <scope>FUNCTION</scope>
    <scope>SUBCELLULAR LOCATION</scope>
    <scope>TISSUE SPECIFICITY</scope>
</reference>
<reference key="31">
    <citation type="journal article" date="2006" name="Cell">
        <title>Global, in vivo, and site-specific phosphorylation dynamics in signaling networks.</title>
        <authorList>
            <person name="Olsen J.V."/>
            <person name="Blagoev B."/>
            <person name="Gnad F."/>
            <person name="Macek B."/>
            <person name="Kumar C."/>
            <person name="Mortensen P."/>
            <person name="Mann M."/>
        </authorList>
    </citation>
    <scope>PHOSPHORYLATION [LARGE SCALE ANALYSIS] AT SER-68</scope>
    <scope>IDENTIFICATION BY MASS SPECTROMETRY [LARGE SCALE ANALYSIS]</scope>
    <source>
        <tissue>Cervix carcinoma</tissue>
    </source>
</reference>
<reference key="32">
    <citation type="journal article" date="2006" name="J. Biol. Chem.">
        <title>ERK8 down-regulates transactivation of the glucocorticoid receptor through Hic-5.</title>
        <authorList>
            <person name="Saelzler M.P."/>
            <person name="Spackman C.C."/>
            <person name="Liu Y."/>
            <person name="Martinez L.C."/>
            <person name="Harris J.P."/>
            <person name="Abe M.K."/>
        </authorList>
    </citation>
    <scope>FUNCTION</scope>
    <scope>INTERACTION WITH MAPK15</scope>
    <scope>MUTAGENESIS OF CYS-369; CYS-372; HIS-428 AND CYS-431</scope>
</reference>
<reference key="33">
    <citation type="journal article" date="2006" name="J. Biol. Chem.">
        <title>Serotonin-, protein kinase C-, and Hic-5-associated redistribution of the platelet serotonin transporter.</title>
        <authorList>
            <person name="Carneiro A.M.D."/>
            <person name="Blakely R.D."/>
        </authorList>
    </citation>
    <scope>FUNCTION</scope>
    <scope>INTERACTION WITH SLC6A4</scope>
</reference>
<reference key="34">
    <citation type="journal article" date="2006" name="Mol. Endocrinol.">
        <title>Mechanism of action of Hic-5/androgen receptor activator 55, a LIM domain-containing nuclear receptor coactivator.</title>
        <authorList>
            <person name="Heitzer M.D."/>
            <person name="DeFranco D.B."/>
        </authorList>
    </citation>
    <scope>FUNCTION</scope>
</reference>
<reference key="35">
    <citation type="journal article" date="2006" name="Neuroendocrinology">
        <title>Gonadotropin-releasing hormone functionally antagonizes testosterone activation of the human androgen receptor in prostate cells through focal adhesion complexes involving Hic-5.</title>
        <authorList>
            <person name="Maudsley S."/>
            <person name="Davidson L."/>
            <person name="Pawson A.J."/>
            <person name="Freestone S.H."/>
            <person name="Lopez de Maturana R."/>
            <person name="Thomson A.A."/>
            <person name="Millar R.P."/>
        </authorList>
    </citation>
    <scope>INTERACTION WITH AR; PTK2B AND SRC</scope>
    <scope>PHOSPHORYLATION</scope>
</reference>
<reference key="36">
    <citation type="journal article" date="2007" name="Biochem. J.">
        <title>Paxillin family members function as Csk-binding proteins that regulate Lyn activity in human and murine platelets.</title>
        <authorList>
            <person name="Rathore V.B."/>
            <person name="Okada M."/>
            <person name="Newman P.J."/>
            <person name="Newman D.K."/>
        </authorList>
    </citation>
    <scope>FUNCTION</scope>
    <scope>TISSUE SPECIFICITY</scope>
    <scope>PHOSPHORYLATION</scope>
    <scope>INTERACTION WITH CSK AND LYN</scope>
</reference>
<reference key="37">
    <citation type="journal article" date="2007" name="Steroids">
        <title>Hic-5/ARA55 a prostate stroma-specific AR coactivator.</title>
        <authorList>
            <person name="Heitzer M.D."/>
            <person name="DeFranco D.B."/>
        </authorList>
    </citation>
    <scope>FUNCTION</scope>
    <scope>TISSUE SPECIFICITY</scope>
    <scope>SUBCELLULAR LOCATION</scope>
</reference>
<reference key="38">
    <citation type="journal article" date="2008" name="Mol. Cell">
        <title>Kinase-selective enrichment enables quantitative phosphoproteomics of the kinome across the cell cycle.</title>
        <authorList>
            <person name="Daub H."/>
            <person name="Olsen J.V."/>
            <person name="Bairlein M."/>
            <person name="Gnad F."/>
            <person name="Oppermann F.S."/>
            <person name="Korner R."/>
            <person name="Greff Z."/>
            <person name="Keri G."/>
            <person name="Stemmann O."/>
            <person name="Mann M."/>
        </authorList>
    </citation>
    <scope>PHOSPHORYLATION [LARGE SCALE ANALYSIS] AT THR-33</scope>
    <scope>IDENTIFICATION BY MASS SPECTROMETRY [LARGE SCALE ANALYSIS]</scope>
    <source>
        <tissue>Cervix carcinoma</tissue>
    </source>
</reference>
<reference key="39">
    <citation type="journal article" date="2009" name="Mol. Cell. Proteomics">
        <title>Large-scale proteomics analysis of the human kinome.</title>
        <authorList>
            <person name="Oppermann F.S."/>
            <person name="Gnad F."/>
            <person name="Olsen J.V."/>
            <person name="Hornberger R."/>
            <person name="Greff Z."/>
            <person name="Keri G."/>
            <person name="Mann M."/>
            <person name="Daub H."/>
        </authorList>
    </citation>
    <scope>IDENTIFICATION BY MASS SPECTROMETRY [LARGE SCALE ANALYSIS]</scope>
</reference>
<reference key="40">
    <citation type="journal article" date="2011" name="Sci. Signal.">
        <title>System-wide temporal characterization of the proteome and phosphoproteome of human embryonic stem cell differentiation.</title>
        <authorList>
            <person name="Rigbolt K.T."/>
            <person name="Prokhorova T.A."/>
            <person name="Akimov V."/>
            <person name="Henningsen J."/>
            <person name="Johansen P.T."/>
            <person name="Kratchmarova I."/>
            <person name="Kassem M."/>
            <person name="Mann M."/>
            <person name="Olsen J.V."/>
            <person name="Blagoev B."/>
        </authorList>
    </citation>
    <scope>PHOSPHORYLATION [LARGE SCALE ANALYSIS] AT SER-137</scope>
    <scope>IDENTIFICATION BY MASS SPECTROMETRY [LARGE SCALE ANALYSIS]</scope>
</reference>
<reference key="41">
    <citation type="journal article" date="2012" name="PLoS ONE">
        <title>Cbl-c ubiquitin ligase activity is increased via the interaction of its RING finger domain with a LIM domain of the paxillin homolog, Hic 5.</title>
        <authorList>
            <person name="Ryan P.E."/>
            <person name="Kales S.C."/>
            <person name="Yadavalli R."/>
            <person name="Nau M.M."/>
            <person name="Zhang H."/>
            <person name="Lipkowitz S."/>
        </authorList>
    </citation>
    <scope>INTERACTION WITH CBLC</scope>
    <scope>SUBCELLULAR LOCATION</scope>
    <scope>MUTAGENESIS OF CYS-287 AND CYS-313</scope>
</reference>
<reference key="42">
    <citation type="journal article" date="2012" name="Proc. Natl. Acad. Sci. U.S.A.">
        <title>N-terminal acetylome analyses and functional insights of the N-terminal acetyltransferase NatB.</title>
        <authorList>
            <person name="Van Damme P."/>
            <person name="Lasa M."/>
            <person name="Polevoda B."/>
            <person name="Gazquez C."/>
            <person name="Elosegui-Artola A."/>
            <person name="Kim D.S."/>
            <person name="De Juan-Pardo E."/>
            <person name="Demeyer K."/>
            <person name="Hole K."/>
            <person name="Larrea E."/>
            <person name="Timmerman E."/>
            <person name="Prieto J."/>
            <person name="Arnesen T."/>
            <person name="Sherman F."/>
            <person name="Gevaert K."/>
            <person name="Aldabe R."/>
        </authorList>
    </citation>
    <scope>ACETYLATION [LARGE SCALE ANALYSIS] AT MET-1</scope>
    <scope>IDENTIFICATION BY MASS SPECTROMETRY [LARGE SCALE ANALYSIS]</scope>
</reference>
<reference key="43">
    <citation type="journal article" date="2013" name="J. Proteome Res.">
        <title>Toward a comprehensive characterization of a human cancer cell phosphoproteome.</title>
        <authorList>
            <person name="Zhou H."/>
            <person name="Di Palma S."/>
            <person name="Preisinger C."/>
            <person name="Peng M."/>
            <person name="Polat A.N."/>
            <person name="Heck A.J."/>
            <person name="Mohammed S."/>
        </authorList>
    </citation>
    <scope>PHOSPHORYLATION [LARGE SCALE ANALYSIS] AT SER-137; SER-141; SER-164; SER-192 AND SER-194</scope>
    <scope>IDENTIFICATION BY MASS SPECTROMETRY [LARGE SCALE ANALYSIS]</scope>
    <source>
        <tissue>Cervix carcinoma</tissue>
    </source>
</reference>
<reference key="44">
    <citation type="journal article" date="2014" name="J. Proteomics">
        <title>An enzyme assisted RP-RPLC approach for in-depth analysis of human liver phosphoproteome.</title>
        <authorList>
            <person name="Bian Y."/>
            <person name="Song C."/>
            <person name="Cheng K."/>
            <person name="Dong M."/>
            <person name="Wang F."/>
            <person name="Huang J."/>
            <person name="Sun D."/>
            <person name="Wang L."/>
            <person name="Ye M."/>
            <person name="Zou H."/>
        </authorList>
    </citation>
    <scope>PHOSPHORYLATION [LARGE SCALE ANALYSIS] AT THR-33; SER-68; SER-137; SER-140; SER-143; SER-192; SER-403 AND THR-407</scope>
    <scope>IDENTIFICATION BY MASS SPECTROMETRY [LARGE SCALE ANALYSIS]</scope>
    <source>
        <tissue>Liver</tissue>
    </source>
</reference>
<comment type="function">
    <text evidence="6 10 13 15 16 18 21 22 24 26 27 28 29 31 33">Functions as a molecular adapter coordinating multiple protein-protein interactions at the focal adhesion complex and in the nucleus. Links various intracellular signaling modules to plasma membrane receptors and regulates the Wnt and TGFB signaling pathways. May also regulate SLC6A3 and SLC6A4 targeting to the plasma membrane hence regulating their activity. In the nucleus, functions as a nuclear receptor coactivator regulating glucocorticoid, androgen, mineralocorticoid and progesterone receptor transcriptional activity. May play a role in the processes of cell growth, proliferation, migration, differentiation and senescence. May have a zinc-dependent DNA-binding activity.</text>
</comment>
<comment type="subunit">
    <text evidence="2 3 6 8 9 13 14 15 18 19 21 22 23 25 26 27 30 31 32 34 35 36">Homooligomer (By similarity). Interacts with PPARG (PubMed:15687259). Interacts with TRAF4 (PubMed:16330715). Interacts with CRIP2 (By similarity). Interacts with HSPB1 (By similarity). Interacts with ILK (By similarity). Interacts with LIMS1 and LIMS2 (By similarity). Interacts with NCK2 (By similarity). Interacts with NUDT16L1 (By similarity). Interacts with PAK (By similarity). Interacts with PTPN12 (By similarity). Interacts with TCF3 (By similarity). Interacts with TCF7L2 (By similarity). Interacts with VCL (By similarity). Interacts (via LD motif 3) with GIT1 (PubMed:12153727). Also interacts with GIT2 (By similarity). Forms a complex with ARHGEF7 (By similarity). Interacts with AR/androgen receptor in a ligand-dependent manner (PubMed:10075738, PubMed:12700349, PubMed:12714604, PubMed:17202804). Interacts with CSK (PubMed:10838081, PubMed:17233630). Interacts with PTK2/FAK1 and PTK2B/PYK2 (PubMed:10838081, PubMed:11311131, PubMed:11856738, PubMed:17202804, PubMed:9422762, PubMed:9664039, PubMed:9756887). Interacts with SLC6A3 and SLC6A4 (PubMed:12177201, PubMed:16803896). Interacts with NR3C1 (PubMed:15211577). Interacts with SMAD3 (PubMed:15561701). Interacts with MAPK15 (PubMed:16624805). Interacts with SRC (PubMed:17202804). Interacts with LYN (PubMed:17233630). Interacts with talin (PubMed:9664039). Interacts (via LIM zinc-binding domain 2) with CBLC (via RING-type zinc finger); the interaction is direct and enhances CBLC E3 ubiquitin-protein ligase activity (PubMed:23145173). Interacts with PARVA (By similarity). Interacts with PXN (By similarity).</text>
</comment>
<comment type="interaction">
    <interactant intactId="EBI-1051449">
        <id>O43294</id>
    </interactant>
    <interactant intactId="EBI-702142">
        <id>Q05397</id>
        <label>PTK2</label>
    </interactant>
    <organismsDiffer>false</organismsDiffer>
    <experiments>3</experiments>
</comment>
<comment type="interaction">
    <interactant intactId="EBI-1051449">
        <id>O43294</id>
    </interactant>
    <interactant intactId="EBI-3650647">
        <id>Q9BUZ4</id>
        <label>TRAF4</label>
    </interactant>
    <organismsDiffer>false</organismsDiffer>
    <experiments>8</experiments>
</comment>
<comment type="interaction">
    <interactant intactId="EBI-1051449">
        <id>O43294</id>
    </interactant>
    <interactant intactId="EBI-2849869">
        <id>O68743</id>
        <label>YPMT1.25Ac</label>
    </interactant>
    <organismsDiffer>true</organismsDiffer>
    <experiments>2</experiments>
</comment>
<comment type="subcellular location">
    <subcellularLocation>
        <location>Cell junction</location>
        <location>Focal adhesion</location>
    </subcellularLocation>
    <subcellularLocation>
        <location>Nucleus matrix</location>
    </subcellularLocation>
    <subcellularLocation>
        <location>Cytoplasm</location>
        <location>Cytoskeleton</location>
    </subcellularLocation>
    <text>Associated with the actin cytoskeleton; colocalizes with stress fibers.</text>
</comment>
<comment type="alternative products">
    <event type="alternative splicing"/>
    <isoform>
        <id>O43294-1</id>
        <name>1</name>
        <sequence type="displayed"/>
    </isoform>
    <isoform>
        <id>O43294-2</id>
        <name>2</name>
        <sequence type="described" ref="VSP_026183"/>
    </isoform>
</comment>
<comment type="tissue specificity">
    <text evidence="6 7 9 17 20 28 29 31 35">Expressed in platelets, smooth muscle and prostate stromal cells (at protein level).</text>
</comment>
<comment type="induction">
    <text evidence="11 12">Up-regulated by TNF and hydrogen peroxide.</text>
</comment>
<comment type="domain">
    <text>The LIM zinc-binding domains mediate glucocorticoid receptor coactivation and interaction with AR, CRIP2, ILK, LIMS1, NR3C1, PPARG, TCF3, TCF7L2, SLC6A3 and SMAD3. The LIM zinc-binding 2 and LIM zinc-binding 3 domains mediate targeting to focal adhesions and actin stress fibers. The LIM zinc-binding 3 and LIM zinc-binding 4 domains mediate interaction with TRAF4 and MAPK15. The LIM zinc-binding 4 domain mediates interaction with HSPB1, homooligomerization and targeting to the nuclear matrix. The LIM zinc-binding 3 domain mediates interaction with PTPN12.</text>
</comment>
<comment type="domain">
    <text>The LD (leucine and aspartate-rich) motif 3 mediates interaction with GIT1 and functions as a nuclear export signal.</text>
</comment>
<comment type="PTM">
    <text evidence="8 9 13 30 31">Phosphorylated by gonadotropin-releasing hormone-activated SRC.</text>
</comment>
<comment type="similarity">
    <text evidence="41">Belongs to the paxillin family.</text>
</comment>
<comment type="sequence caution" evidence="41">
    <conflict type="erroneous initiation">
        <sequence resource="EMBL-CDS" id="AAH32545"/>
    </conflict>
    <text>Extended N-terminus.</text>
</comment>